<sequence length="360" mass="37792">MASTSFFPPRPSSTLAEIASLTKATLVDASYAEHRITGLASLDEAGPMHLSFFENLRYSDELANTRAGACLVSERFEGRVPSHVAVLRARRPFHAFVAYARHLYSDALRPHTGIGAPGIAPTAVIHETAKLEDEVTVEPLAVIGPDVEIGSGTVIGAGAVIAAGVKIGRDCDIGAGSHLQHALIGNNVLMHPGCHIGQDGFGFIFAGQHTKVPQTGRVIIQHDVELGAGTTIDRGSLRDTVIGEGTKIDNQVQIGHNVTIGRHCVIAAKCGLAGSLTLGDNVALGAMVGINNHVMIGDGAQVAAMSGVKDSIPAGERWGGIFARPTRTWFREMLAVRRLAEGSGAETAARPDDDRDEGRG</sequence>
<name>LPXD_RHOPT</name>
<proteinExistence type="inferred from homology"/>
<protein>
    <recommendedName>
        <fullName evidence="1">UDP-3-O-acylglucosamine N-acyltransferase</fullName>
        <ecNumber evidence="1">2.3.1.191</ecNumber>
    </recommendedName>
</protein>
<keyword id="KW-0012">Acyltransferase</keyword>
<keyword id="KW-0441">Lipid A biosynthesis</keyword>
<keyword id="KW-0444">Lipid biosynthesis</keyword>
<keyword id="KW-0443">Lipid metabolism</keyword>
<keyword id="KW-0677">Repeat</keyword>
<keyword id="KW-0808">Transferase</keyword>
<feature type="chain" id="PRO_1000127696" description="UDP-3-O-acylglucosamine N-acyltransferase">
    <location>
        <begin position="1"/>
        <end position="360"/>
    </location>
</feature>
<feature type="region of interest" description="Disordered" evidence="2">
    <location>
        <begin position="341"/>
        <end position="360"/>
    </location>
</feature>
<feature type="compositionally biased region" description="Basic and acidic residues" evidence="2">
    <location>
        <begin position="349"/>
        <end position="360"/>
    </location>
</feature>
<feature type="active site" description="Proton acceptor" evidence="1">
    <location>
        <position position="256"/>
    </location>
</feature>
<dbReference type="EC" id="2.3.1.191" evidence="1"/>
<dbReference type="EMBL" id="CP001096">
    <property type="protein sequence ID" value="ACF01761.1"/>
    <property type="molecule type" value="Genomic_DNA"/>
</dbReference>
<dbReference type="RefSeq" id="WP_012496355.1">
    <property type="nucleotide sequence ID" value="NC_011004.1"/>
</dbReference>
<dbReference type="SMR" id="B3Q7J5"/>
<dbReference type="KEGG" id="rpt:Rpal_3259"/>
<dbReference type="HOGENOM" id="CLU_049865_0_2_5"/>
<dbReference type="OrthoDB" id="9784739at2"/>
<dbReference type="UniPathway" id="UPA00973"/>
<dbReference type="Proteomes" id="UP000001725">
    <property type="component" value="Chromosome"/>
</dbReference>
<dbReference type="GO" id="GO:0016020">
    <property type="term" value="C:membrane"/>
    <property type="evidence" value="ECO:0007669"/>
    <property type="project" value="GOC"/>
</dbReference>
<dbReference type="GO" id="GO:0016410">
    <property type="term" value="F:N-acyltransferase activity"/>
    <property type="evidence" value="ECO:0007669"/>
    <property type="project" value="InterPro"/>
</dbReference>
<dbReference type="GO" id="GO:0009245">
    <property type="term" value="P:lipid A biosynthetic process"/>
    <property type="evidence" value="ECO:0007669"/>
    <property type="project" value="UniProtKB-UniRule"/>
</dbReference>
<dbReference type="CDD" id="cd03352">
    <property type="entry name" value="LbH_LpxD"/>
    <property type="match status" value="1"/>
</dbReference>
<dbReference type="Gene3D" id="2.160.10.10">
    <property type="entry name" value="Hexapeptide repeat proteins"/>
    <property type="match status" value="1"/>
</dbReference>
<dbReference type="Gene3D" id="3.40.1390.10">
    <property type="entry name" value="MurE/MurF, N-terminal domain"/>
    <property type="match status" value="1"/>
</dbReference>
<dbReference type="HAMAP" id="MF_00523">
    <property type="entry name" value="LpxD"/>
    <property type="match status" value="1"/>
</dbReference>
<dbReference type="InterPro" id="IPR001451">
    <property type="entry name" value="Hexapep"/>
</dbReference>
<dbReference type="InterPro" id="IPR018357">
    <property type="entry name" value="Hexapep_transf_CS"/>
</dbReference>
<dbReference type="InterPro" id="IPR007691">
    <property type="entry name" value="LpxD"/>
</dbReference>
<dbReference type="InterPro" id="IPR011004">
    <property type="entry name" value="Trimer_LpxA-like_sf"/>
</dbReference>
<dbReference type="InterPro" id="IPR020573">
    <property type="entry name" value="UDP_GlcNAc_AcTrfase_non-rep"/>
</dbReference>
<dbReference type="NCBIfam" id="TIGR01853">
    <property type="entry name" value="lipid_A_lpxD"/>
    <property type="match status" value="1"/>
</dbReference>
<dbReference type="NCBIfam" id="NF002060">
    <property type="entry name" value="PRK00892.1"/>
    <property type="match status" value="1"/>
</dbReference>
<dbReference type="PANTHER" id="PTHR43378">
    <property type="entry name" value="UDP-3-O-ACYLGLUCOSAMINE N-ACYLTRANSFERASE"/>
    <property type="match status" value="1"/>
</dbReference>
<dbReference type="PANTHER" id="PTHR43378:SF2">
    <property type="entry name" value="UDP-3-O-ACYLGLUCOSAMINE N-ACYLTRANSFERASE 1, MITOCHONDRIAL-RELATED"/>
    <property type="match status" value="1"/>
</dbReference>
<dbReference type="Pfam" id="PF00132">
    <property type="entry name" value="Hexapep"/>
    <property type="match status" value="2"/>
</dbReference>
<dbReference type="Pfam" id="PF04613">
    <property type="entry name" value="LpxD"/>
    <property type="match status" value="1"/>
</dbReference>
<dbReference type="SUPFAM" id="SSF51161">
    <property type="entry name" value="Trimeric LpxA-like enzymes"/>
    <property type="match status" value="1"/>
</dbReference>
<dbReference type="PROSITE" id="PS00101">
    <property type="entry name" value="HEXAPEP_TRANSFERASES"/>
    <property type="match status" value="3"/>
</dbReference>
<accession>B3Q7J5</accession>
<evidence type="ECO:0000255" key="1">
    <source>
        <dbReference type="HAMAP-Rule" id="MF_00523"/>
    </source>
</evidence>
<evidence type="ECO:0000256" key="2">
    <source>
        <dbReference type="SAM" id="MobiDB-lite"/>
    </source>
</evidence>
<reference key="1">
    <citation type="submission" date="2008-05" db="EMBL/GenBank/DDBJ databases">
        <title>Complete sequence of Rhodopseudomonas palustris TIE-1.</title>
        <authorList>
            <consortium name="US DOE Joint Genome Institute"/>
            <person name="Lucas S."/>
            <person name="Copeland A."/>
            <person name="Lapidus A."/>
            <person name="Glavina del Rio T."/>
            <person name="Dalin E."/>
            <person name="Tice H."/>
            <person name="Pitluck S."/>
            <person name="Chain P."/>
            <person name="Malfatti S."/>
            <person name="Shin M."/>
            <person name="Vergez L."/>
            <person name="Lang D."/>
            <person name="Schmutz J."/>
            <person name="Larimer F."/>
            <person name="Land M."/>
            <person name="Hauser L."/>
            <person name="Kyrpides N."/>
            <person name="Mikhailova N."/>
            <person name="Emerson D."/>
            <person name="Newman D.K."/>
            <person name="Roden E."/>
            <person name="Richardson P."/>
        </authorList>
    </citation>
    <scope>NUCLEOTIDE SEQUENCE [LARGE SCALE GENOMIC DNA]</scope>
    <source>
        <strain>TIE-1</strain>
    </source>
</reference>
<comment type="function">
    <text evidence="1">Catalyzes the N-acylation of UDP-3-O-acylglucosamine using 3-hydroxyacyl-ACP as the acyl donor. Is involved in the biosynthesis of lipid A, a phosphorylated glycolipid that anchors the lipopolysaccharide to the outer membrane of the cell.</text>
</comment>
<comment type="catalytic activity">
    <reaction evidence="1">
        <text>a UDP-3-O-[(3R)-3-hydroxyacyl]-alpha-D-glucosamine + a (3R)-hydroxyacyl-[ACP] = a UDP-2-N,3-O-bis[(3R)-3-hydroxyacyl]-alpha-D-glucosamine + holo-[ACP] + H(+)</text>
        <dbReference type="Rhea" id="RHEA:53836"/>
        <dbReference type="Rhea" id="RHEA-COMP:9685"/>
        <dbReference type="Rhea" id="RHEA-COMP:9945"/>
        <dbReference type="ChEBI" id="CHEBI:15378"/>
        <dbReference type="ChEBI" id="CHEBI:64479"/>
        <dbReference type="ChEBI" id="CHEBI:78827"/>
        <dbReference type="ChEBI" id="CHEBI:137740"/>
        <dbReference type="ChEBI" id="CHEBI:137748"/>
        <dbReference type="EC" id="2.3.1.191"/>
    </reaction>
</comment>
<comment type="pathway">
    <text evidence="1">Bacterial outer membrane biogenesis; LPS lipid A biosynthesis.</text>
</comment>
<comment type="subunit">
    <text evidence="1">Homotrimer.</text>
</comment>
<comment type="similarity">
    <text evidence="1">Belongs to the transferase hexapeptide repeat family. LpxD subfamily.</text>
</comment>
<gene>
    <name evidence="1" type="primary">lpxD</name>
    <name type="ordered locus">Rpal_3259</name>
</gene>
<organism>
    <name type="scientific">Rhodopseudomonas palustris (strain TIE-1)</name>
    <dbReference type="NCBI Taxonomy" id="395960"/>
    <lineage>
        <taxon>Bacteria</taxon>
        <taxon>Pseudomonadati</taxon>
        <taxon>Pseudomonadota</taxon>
        <taxon>Alphaproteobacteria</taxon>
        <taxon>Hyphomicrobiales</taxon>
        <taxon>Nitrobacteraceae</taxon>
        <taxon>Rhodopseudomonas</taxon>
    </lineage>
</organism>